<proteinExistence type="evidence at protein level"/>
<dbReference type="EC" id="2.7.7.13" evidence="3"/>
<dbReference type="EMBL" id="U19608">
    <property type="protein sequence ID" value="AAC49289.1"/>
    <property type="molecule type" value="Genomic_DNA"/>
</dbReference>
<dbReference type="EMBL" id="U24437">
    <property type="protein sequence ID" value="AAA69677.1"/>
    <property type="molecule type" value="Genomic_DNA"/>
</dbReference>
<dbReference type="EMBL" id="Z74103">
    <property type="protein sequence ID" value="CAA98617.1"/>
    <property type="molecule type" value="Genomic_DNA"/>
</dbReference>
<dbReference type="EMBL" id="BK006938">
    <property type="protein sequence ID" value="DAA11801.1"/>
    <property type="molecule type" value="Genomic_DNA"/>
</dbReference>
<dbReference type="PIR" id="S67590">
    <property type="entry name" value="S67590"/>
</dbReference>
<dbReference type="RefSeq" id="NP_010228.1">
    <property type="nucleotide sequence ID" value="NM_001180114.1"/>
</dbReference>
<dbReference type="SMR" id="P41940"/>
<dbReference type="BioGRID" id="32003">
    <property type="interactions" value="218"/>
</dbReference>
<dbReference type="DIP" id="DIP-4322N"/>
<dbReference type="FunCoup" id="P41940">
    <property type="interactions" value="1824"/>
</dbReference>
<dbReference type="IntAct" id="P41940">
    <property type="interactions" value="488"/>
</dbReference>
<dbReference type="MINT" id="P41940"/>
<dbReference type="STRING" id="4932.YDL055C"/>
<dbReference type="iPTMnet" id="P41940"/>
<dbReference type="PaxDb" id="4932-YDL055C"/>
<dbReference type="PeptideAtlas" id="P41940"/>
<dbReference type="TopDownProteomics" id="P41940"/>
<dbReference type="EnsemblFungi" id="YDL055C_mRNA">
    <property type="protein sequence ID" value="YDL055C"/>
    <property type="gene ID" value="YDL055C"/>
</dbReference>
<dbReference type="GeneID" id="851504"/>
<dbReference type="KEGG" id="sce:YDL055C"/>
<dbReference type="AGR" id="SGD:S000002213"/>
<dbReference type="SGD" id="S000002213">
    <property type="gene designation" value="PSA1"/>
</dbReference>
<dbReference type="VEuPathDB" id="FungiDB:YDL055C"/>
<dbReference type="eggNOG" id="KOG1322">
    <property type="taxonomic scope" value="Eukaryota"/>
</dbReference>
<dbReference type="GeneTree" id="ENSGT00940000158909"/>
<dbReference type="HOGENOM" id="CLU_029499_0_0_1"/>
<dbReference type="InParanoid" id="P41940"/>
<dbReference type="OMA" id="GPNCWIC"/>
<dbReference type="OrthoDB" id="1733332at2759"/>
<dbReference type="BioCyc" id="YEAST:YDL055C-MONOMER"/>
<dbReference type="BRENDA" id="2.7.7.13">
    <property type="organism ID" value="984"/>
</dbReference>
<dbReference type="UniPathway" id="UPA00126">
    <property type="reaction ID" value="UER00930"/>
</dbReference>
<dbReference type="BioGRID-ORCS" id="851504">
    <property type="hits" value="1 hit in 10 CRISPR screens"/>
</dbReference>
<dbReference type="PRO" id="PR:P41940"/>
<dbReference type="Proteomes" id="UP000002311">
    <property type="component" value="Chromosome IV"/>
</dbReference>
<dbReference type="RNAct" id="P41940">
    <property type="molecule type" value="protein"/>
</dbReference>
<dbReference type="GO" id="GO:0005737">
    <property type="term" value="C:cytoplasm"/>
    <property type="evidence" value="ECO:0007005"/>
    <property type="project" value="SGD"/>
</dbReference>
<dbReference type="GO" id="GO:0005525">
    <property type="term" value="F:GTP binding"/>
    <property type="evidence" value="ECO:0007669"/>
    <property type="project" value="UniProtKB-KW"/>
</dbReference>
<dbReference type="GO" id="GO:0004475">
    <property type="term" value="F:mannose-1-phosphate guanylyltransferase (GTP) activity"/>
    <property type="evidence" value="ECO:0000314"/>
    <property type="project" value="SGD"/>
</dbReference>
<dbReference type="GO" id="GO:0000032">
    <property type="term" value="P:cell wall mannoprotein biosynthetic process"/>
    <property type="evidence" value="ECO:0000315"/>
    <property type="project" value="SGD"/>
</dbReference>
<dbReference type="GO" id="GO:0009298">
    <property type="term" value="P:GDP-mannose biosynthetic process"/>
    <property type="evidence" value="ECO:0000314"/>
    <property type="project" value="SGD"/>
</dbReference>
<dbReference type="GO" id="GO:0006486">
    <property type="term" value="P:protein glycosylation"/>
    <property type="evidence" value="ECO:0000315"/>
    <property type="project" value="SGD"/>
</dbReference>
<dbReference type="CDD" id="cd06425">
    <property type="entry name" value="M1P_guanylylT_B_like_N"/>
    <property type="match status" value="1"/>
</dbReference>
<dbReference type="FunFam" id="2.160.10.10:FF:000017">
    <property type="entry name" value="Mannose-1-phosphate guanyltransferase"/>
    <property type="match status" value="1"/>
</dbReference>
<dbReference type="FunFam" id="3.90.550.10:FF:000013">
    <property type="entry name" value="mannose-1-phosphate guanyltransferase beta"/>
    <property type="match status" value="1"/>
</dbReference>
<dbReference type="Gene3D" id="2.160.10.10">
    <property type="entry name" value="Hexapeptide repeat proteins"/>
    <property type="match status" value="1"/>
</dbReference>
<dbReference type="Gene3D" id="3.90.550.10">
    <property type="entry name" value="Spore Coat Polysaccharide Biosynthesis Protein SpsA, Chain A"/>
    <property type="match status" value="1"/>
</dbReference>
<dbReference type="InterPro" id="IPR056729">
    <property type="entry name" value="GMPPB_C"/>
</dbReference>
<dbReference type="InterPro" id="IPR045233">
    <property type="entry name" value="GMPPB_N"/>
</dbReference>
<dbReference type="InterPro" id="IPR018357">
    <property type="entry name" value="Hexapep_transf_CS"/>
</dbReference>
<dbReference type="InterPro" id="IPR050486">
    <property type="entry name" value="Mannose-1P_guanyltransferase"/>
</dbReference>
<dbReference type="InterPro" id="IPR005835">
    <property type="entry name" value="NTP_transferase_dom"/>
</dbReference>
<dbReference type="InterPro" id="IPR029044">
    <property type="entry name" value="Nucleotide-diphossugar_trans"/>
</dbReference>
<dbReference type="PANTHER" id="PTHR22572">
    <property type="entry name" value="SUGAR-1-PHOSPHATE GUANYL TRANSFERASE"/>
    <property type="match status" value="1"/>
</dbReference>
<dbReference type="Pfam" id="PF25087">
    <property type="entry name" value="GMPPB_C"/>
    <property type="match status" value="1"/>
</dbReference>
<dbReference type="Pfam" id="PF00483">
    <property type="entry name" value="NTP_transferase"/>
    <property type="match status" value="1"/>
</dbReference>
<dbReference type="SUPFAM" id="SSF53448">
    <property type="entry name" value="Nucleotide-diphospho-sugar transferases"/>
    <property type="match status" value="1"/>
</dbReference>
<dbReference type="PROSITE" id="PS00101">
    <property type="entry name" value="HEXAPEP_TRANSFERASES"/>
    <property type="match status" value="2"/>
</dbReference>
<protein>
    <recommendedName>
        <fullName evidence="5">Mannose-1-phosphate guanyltransferase</fullName>
        <ecNumber evidence="3">2.7.7.13</ecNumber>
    </recommendedName>
    <alternativeName>
        <fullName evidence="6">ATP-mannose-1-phosphate guanylyltransferase</fullName>
    </alternativeName>
    <alternativeName>
        <fullName evidence="6">GDP-mannose pyrophosphorylase</fullName>
    </alternativeName>
    <alternativeName>
        <fullName evidence="6">NDP-hexose pyrophosphorylase</fullName>
    </alternativeName>
</protein>
<name>MPG1_YEAST</name>
<comment type="function">
    <text evidence="1 3">Involved in cell wall synthesis where it is required for glycosylation. Involved in cell cycle progression through cell-size checkpoint.</text>
</comment>
<comment type="catalytic activity">
    <reaction evidence="3">
        <text>alpha-D-mannose 1-phosphate + GTP + H(+) = GDP-alpha-D-mannose + diphosphate</text>
        <dbReference type="Rhea" id="RHEA:15229"/>
        <dbReference type="ChEBI" id="CHEBI:15378"/>
        <dbReference type="ChEBI" id="CHEBI:33019"/>
        <dbReference type="ChEBI" id="CHEBI:37565"/>
        <dbReference type="ChEBI" id="CHEBI:57527"/>
        <dbReference type="ChEBI" id="CHEBI:58409"/>
        <dbReference type="EC" id="2.7.7.13"/>
    </reaction>
</comment>
<comment type="pathway">
    <text evidence="3">Nucleotide-sugar biosynthesis; GDP-alpha-D-mannose biosynthesis; GDP-alpha-D-mannose from alpha-D-mannose 1-phosphate (GTP route): step 1/1.</text>
</comment>
<comment type="subcellular location">
    <subcellularLocation>
        <location evidence="3">Cytoplasm</location>
    </subcellularLocation>
</comment>
<comment type="miscellaneous">
    <text evidence="2">Present with 97100 molecules/cell in log phase SD medium.</text>
</comment>
<comment type="similarity">
    <text evidence="6">Belongs to the transferase hexapeptide repeat family.</text>
</comment>
<accession>P41940</accession>
<accession>D6VRU1</accession>
<keyword id="KW-0131">Cell cycle</keyword>
<keyword id="KW-0963">Cytoplasm</keyword>
<keyword id="KW-0342">GTP-binding</keyword>
<keyword id="KW-1017">Isopeptide bond</keyword>
<keyword id="KW-0547">Nucleotide-binding</keyword>
<keyword id="KW-0597">Phosphoprotein</keyword>
<keyword id="KW-1185">Reference proteome</keyword>
<keyword id="KW-0808">Transferase</keyword>
<keyword id="KW-0832">Ubl conjugation</keyword>
<reference key="1">
    <citation type="journal article" date="1996" name="Curr. Genet.">
        <title>Over-expression of S. cerevisiae G1 cyclins restores the viability of alg1 N-glycosylation mutants.</title>
        <authorList>
            <person name="Benton B.K."/>
            <person name="Plump S.D."/>
            <person name="Roos J."/>
            <person name="Lennarz W.J."/>
            <person name="Cross F.R."/>
        </authorList>
    </citation>
    <scope>NUCLEOTIDE SEQUENCE [GENOMIC DNA]</scope>
</reference>
<reference key="2">
    <citation type="submission" date="1995-07" db="EMBL/GenBank/DDBJ databases">
        <title>Isolation of the gene encoding mannose-1-phosphate guanyltransferase from yeast.</title>
        <authorList>
            <person name="Schultz J."/>
            <person name="Sprague G.F. Jr."/>
        </authorList>
    </citation>
    <scope>NUCLEOTIDE SEQUENCE [GENOMIC DNA]</scope>
</reference>
<reference key="3">
    <citation type="journal article" date="1997" name="J. Biol. Chem.">
        <title>Saccharomyces cerevisiae VIG9 encodes GDP-mannose pyrophosphorylase, which is essential for protein glycosylation.</title>
        <authorList>
            <person name="Hashimoto H."/>
            <person name="Sakakibara A."/>
            <person name="Yamasaki M."/>
            <person name="Yoda K."/>
        </authorList>
    </citation>
    <scope>NUCLEOTIDE SEQUENCE [GENOMIC DNA]</scope>
    <scope>FUNCTION</scope>
    <scope>CATALYTIC ACTIVITY</scope>
    <scope>PATHWAY</scope>
    <scope>SUBCELLULAR LOCATION</scope>
</reference>
<reference key="4">
    <citation type="journal article" date="1997" name="Nature">
        <title>The nucleotide sequence of Saccharomyces cerevisiae chromosome IV.</title>
        <authorList>
            <person name="Jacq C."/>
            <person name="Alt-Moerbe J."/>
            <person name="Andre B."/>
            <person name="Arnold W."/>
            <person name="Bahr A."/>
            <person name="Ballesta J.P.G."/>
            <person name="Bargues M."/>
            <person name="Baron L."/>
            <person name="Becker A."/>
            <person name="Biteau N."/>
            <person name="Bloecker H."/>
            <person name="Blugeon C."/>
            <person name="Boskovic J."/>
            <person name="Brandt P."/>
            <person name="Brueckner M."/>
            <person name="Buitrago M.J."/>
            <person name="Coster F."/>
            <person name="Delaveau T."/>
            <person name="del Rey F."/>
            <person name="Dujon B."/>
            <person name="Eide L.G."/>
            <person name="Garcia-Cantalejo J.M."/>
            <person name="Goffeau A."/>
            <person name="Gomez-Peris A."/>
            <person name="Granotier C."/>
            <person name="Hanemann V."/>
            <person name="Hankeln T."/>
            <person name="Hoheisel J.D."/>
            <person name="Jaeger W."/>
            <person name="Jimenez A."/>
            <person name="Jonniaux J.-L."/>
            <person name="Kraemer C."/>
            <person name="Kuester H."/>
            <person name="Laamanen P."/>
            <person name="Legros Y."/>
            <person name="Louis E.J."/>
            <person name="Moeller-Rieker S."/>
            <person name="Monnet A."/>
            <person name="Moro M."/>
            <person name="Mueller-Auer S."/>
            <person name="Nussbaumer B."/>
            <person name="Paricio N."/>
            <person name="Paulin L."/>
            <person name="Perea J."/>
            <person name="Perez-Alonso M."/>
            <person name="Perez-Ortin J.E."/>
            <person name="Pohl T.M."/>
            <person name="Prydz H."/>
            <person name="Purnelle B."/>
            <person name="Rasmussen S.W."/>
            <person name="Remacha M.A."/>
            <person name="Revuelta J.L."/>
            <person name="Rieger M."/>
            <person name="Salom D."/>
            <person name="Saluz H.P."/>
            <person name="Saiz J.E."/>
            <person name="Saren A.-M."/>
            <person name="Schaefer M."/>
            <person name="Scharfe M."/>
            <person name="Schmidt E.R."/>
            <person name="Schneider C."/>
            <person name="Scholler P."/>
            <person name="Schwarz S."/>
            <person name="Soler-Mira A."/>
            <person name="Urrestarazu L.A."/>
            <person name="Verhasselt P."/>
            <person name="Vissers S."/>
            <person name="Voet M."/>
            <person name="Volckaert G."/>
            <person name="Wagner G."/>
            <person name="Wambutt R."/>
            <person name="Wedler E."/>
            <person name="Wedler H."/>
            <person name="Woelfl S."/>
            <person name="Harris D.E."/>
            <person name="Bowman S."/>
            <person name="Brown D."/>
            <person name="Churcher C.M."/>
            <person name="Connor R."/>
            <person name="Dedman K."/>
            <person name="Gentles S."/>
            <person name="Hamlin N."/>
            <person name="Hunt S."/>
            <person name="Jones L."/>
            <person name="McDonald S."/>
            <person name="Murphy L.D."/>
            <person name="Niblett D."/>
            <person name="Odell C."/>
            <person name="Oliver K."/>
            <person name="Rajandream M.A."/>
            <person name="Richards C."/>
            <person name="Shore L."/>
            <person name="Walsh S.V."/>
            <person name="Barrell B.G."/>
            <person name="Dietrich F.S."/>
            <person name="Mulligan J.T."/>
            <person name="Allen E."/>
            <person name="Araujo R."/>
            <person name="Aviles E."/>
            <person name="Berno A."/>
            <person name="Carpenter J."/>
            <person name="Chen E."/>
            <person name="Cherry J.M."/>
            <person name="Chung E."/>
            <person name="Duncan M."/>
            <person name="Hunicke-Smith S."/>
            <person name="Hyman R.W."/>
            <person name="Komp C."/>
            <person name="Lashkari D."/>
            <person name="Lew H."/>
            <person name="Lin D."/>
            <person name="Mosedale D."/>
            <person name="Nakahara K."/>
            <person name="Namath A."/>
            <person name="Oefner P."/>
            <person name="Oh C."/>
            <person name="Petel F.X."/>
            <person name="Roberts D."/>
            <person name="Schramm S."/>
            <person name="Schroeder M."/>
            <person name="Shogren T."/>
            <person name="Shroff N."/>
            <person name="Winant A."/>
            <person name="Yelton M.A."/>
            <person name="Botstein D."/>
            <person name="Davis R.W."/>
            <person name="Johnston M."/>
            <person name="Andrews S."/>
            <person name="Brinkman R."/>
            <person name="Cooper J."/>
            <person name="Ding H."/>
            <person name="Du Z."/>
            <person name="Favello A."/>
            <person name="Fulton L."/>
            <person name="Gattung S."/>
            <person name="Greco T."/>
            <person name="Hallsworth K."/>
            <person name="Hawkins J."/>
            <person name="Hillier L.W."/>
            <person name="Jier M."/>
            <person name="Johnson D."/>
            <person name="Johnston L."/>
            <person name="Kirsten J."/>
            <person name="Kucaba T."/>
            <person name="Langston Y."/>
            <person name="Latreille P."/>
            <person name="Le T."/>
            <person name="Mardis E."/>
            <person name="Menezes S."/>
            <person name="Miller N."/>
            <person name="Nhan M."/>
            <person name="Pauley A."/>
            <person name="Peluso D."/>
            <person name="Rifkin L."/>
            <person name="Riles L."/>
            <person name="Taich A."/>
            <person name="Trevaskis E."/>
            <person name="Vignati D."/>
            <person name="Wilcox L."/>
            <person name="Wohldman P."/>
            <person name="Vaudin M."/>
            <person name="Wilson R."/>
            <person name="Waterston R."/>
            <person name="Albermann K."/>
            <person name="Hani J."/>
            <person name="Heumann K."/>
            <person name="Kleine K."/>
            <person name="Mewes H.-W."/>
            <person name="Zollner A."/>
            <person name="Zaccaria P."/>
        </authorList>
    </citation>
    <scope>NUCLEOTIDE SEQUENCE [LARGE SCALE GENOMIC DNA]</scope>
    <source>
        <strain>ATCC 204508 / S288c</strain>
    </source>
</reference>
<reference key="5">
    <citation type="journal article" date="2014" name="G3 (Bethesda)">
        <title>The reference genome sequence of Saccharomyces cerevisiae: Then and now.</title>
        <authorList>
            <person name="Engel S.R."/>
            <person name="Dietrich F.S."/>
            <person name="Fisk D.G."/>
            <person name="Binkley G."/>
            <person name="Balakrishnan R."/>
            <person name="Costanzo M.C."/>
            <person name="Dwight S.S."/>
            <person name="Hitz B.C."/>
            <person name="Karra K."/>
            <person name="Nash R.S."/>
            <person name="Weng S."/>
            <person name="Wong E.D."/>
            <person name="Lloyd P."/>
            <person name="Skrzypek M.S."/>
            <person name="Miyasato S.R."/>
            <person name="Simison M."/>
            <person name="Cherry J.M."/>
        </authorList>
    </citation>
    <scope>GENOME REANNOTATION</scope>
    <source>
        <strain>ATCC 204508 / S288c</strain>
    </source>
</reference>
<reference key="6">
    <citation type="journal article" date="2000" name="Biosci. Biotechnol. Biochem.">
        <title>Defect in cell wall integrity of the yeast Saccharomyces cerevisiae caused by a mutation of the GDP-mannose pyrophosphorylase gene VIG9.</title>
        <authorList>
            <person name="Yoda K."/>
            <person name="Kawada T."/>
            <person name="Kaibara C."/>
            <person name="Fujie A."/>
            <person name="Abe M."/>
            <person name="Hashimoto H."/>
            <person name="Shimizu J."/>
            <person name="Tomishige N."/>
            <person name="Noda Y."/>
            <person name="Yamasaki M."/>
        </authorList>
    </citation>
    <scope>FUNCTION</scope>
</reference>
<reference key="7">
    <citation type="journal article" date="2003" name="Nature">
        <title>Global analysis of protein expression in yeast.</title>
        <authorList>
            <person name="Ghaemmaghami S."/>
            <person name="Huh W.-K."/>
            <person name="Bower K."/>
            <person name="Howson R.W."/>
            <person name="Belle A."/>
            <person name="Dephoure N."/>
            <person name="O'Shea E.K."/>
            <person name="Weissman J.S."/>
        </authorList>
    </citation>
    <scope>LEVEL OF PROTEIN EXPRESSION [LARGE SCALE ANALYSIS]</scope>
</reference>
<reference key="8">
    <citation type="journal article" date="2008" name="Mol. Cell. Proteomics">
        <title>A multidimensional chromatography technology for in-depth phosphoproteome analysis.</title>
        <authorList>
            <person name="Albuquerque C.P."/>
            <person name="Smolka M.B."/>
            <person name="Payne S.H."/>
            <person name="Bafna V."/>
            <person name="Eng J."/>
            <person name="Zhou H."/>
        </authorList>
    </citation>
    <scope>PHOSPHORYLATION [LARGE SCALE ANALYSIS] AT THR-153</scope>
    <scope>IDENTIFICATION BY MASS SPECTROMETRY [LARGE SCALE ANALYSIS]</scope>
</reference>
<reference key="9">
    <citation type="journal article" date="2009" name="Science">
        <title>Global analysis of Cdk1 substrate phosphorylation sites provides insights into evolution.</title>
        <authorList>
            <person name="Holt L.J."/>
            <person name="Tuch B.B."/>
            <person name="Villen J."/>
            <person name="Johnson A.D."/>
            <person name="Gygi S.P."/>
            <person name="Morgan D.O."/>
        </authorList>
    </citation>
    <scope>IDENTIFICATION BY MASS SPECTROMETRY [LARGE SCALE ANALYSIS]</scope>
</reference>
<reference key="10">
    <citation type="journal article" date="2012" name="Proc. Natl. Acad. Sci. U.S.A.">
        <title>N-terminal acetylome analyses and functional insights of the N-terminal acetyltransferase NatB.</title>
        <authorList>
            <person name="Van Damme P."/>
            <person name="Lasa M."/>
            <person name="Polevoda B."/>
            <person name="Gazquez C."/>
            <person name="Elosegui-Artola A."/>
            <person name="Kim D.S."/>
            <person name="De Juan-Pardo E."/>
            <person name="Demeyer K."/>
            <person name="Hole K."/>
            <person name="Larrea E."/>
            <person name="Timmerman E."/>
            <person name="Prieto J."/>
            <person name="Arnesen T."/>
            <person name="Sherman F."/>
            <person name="Gevaert K."/>
            <person name="Aldabe R."/>
        </authorList>
    </citation>
    <scope>IDENTIFICATION BY MASS SPECTROMETRY [LARGE SCALE ANALYSIS]</scope>
</reference>
<reference key="11">
    <citation type="journal article" date="2012" name="Proteomics">
        <title>Sites of ubiquitin attachment in Saccharomyces cerevisiae.</title>
        <authorList>
            <person name="Starita L.M."/>
            <person name="Lo R.S."/>
            <person name="Eng J.K."/>
            <person name="von Haller P.D."/>
            <person name="Fields S."/>
        </authorList>
    </citation>
    <scope>UBIQUITINATION [LARGE SCALE ANALYSIS] AT LYS-244</scope>
    <scope>IDENTIFICATION BY MASS SPECTROMETRY [LARGE SCALE ANALYSIS]</scope>
</reference>
<organism>
    <name type="scientific">Saccharomyces cerevisiae (strain ATCC 204508 / S288c)</name>
    <name type="common">Baker's yeast</name>
    <dbReference type="NCBI Taxonomy" id="559292"/>
    <lineage>
        <taxon>Eukaryota</taxon>
        <taxon>Fungi</taxon>
        <taxon>Dikarya</taxon>
        <taxon>Ascomycota</taxon>
        <taxon>Saccharomycotina</taxon>
        <taxon>Saccharomycetes</taxon>
        <taxon>Saccharomycetales</taxon>
        <taxon>Saccharomycetaceae</taxon>
        <taxon>Saccharomyces</taxon>
    </lineage>
</organism>
<gene>
    <name type="primary">PSA1</name>
    <name type="synonym">MPG1</name>
    <name type="synonym">SRB1</name>
    <name evidence="4" type="synonym">VIG9</name>
    <name type="ordered locus">YDL055C</name>
</gene>
<feature type="chain" id="PRO_0000068741" description="Mannose-1-phosphate guanyltransferase">
    <location>
        <begin position="1"/>
        <end position="361"/>
    </location>
</feature>
<feature type="modified residue" description="Phosphothreonine" evidence="7">
    <location>
        <position position="153"/>
    </location>
</feature>
<feature type="cross-link" description="Glycyl lysine isopeptide (Lys-Gly) (interchain with G-Cter in ubiquitin)" evidence="8">
    <location>
        <position position="244"/>
    </location>
</feature>
<feature type="sequence conflict" description="In Ref. 2; AAA69677." evidence="6" ref="2">
    <original>V</original>
    <variation>A</variation>
    <location>
        <position position="50"/>
    </location>
</feature>
<sequence length="361" mass="39566">MKGLILVGGYGTRLRPLTLTVPKPLVEFGNRPMILHQIEALANAGVTDIVLAVNYRPEVMVETLKKYEKEYGVNITFSVETEPLGTAGPLKLAEDVLKKDNSPFFVLNSDVICEYPFKELADFHKAHGGKGTIVATKVDEPSKYGVIVHDIATPNLIDRFVEKPKEFVGNRINAGLYILNPEVIDLIEMKPTSIEKETFPILVEEKQLYSFDLEGFWMDVGQPKDFLSGTVLYLNSLAKRQPKKLATGANIVGNALIDPTAKISSTAKIGPDVVIGPNVTIGDGVRITRSVVLCNSTIKNHSLVKSTIVGWNSTVGQWCRLEGVTVLGDDVEVKDEIYINGGKVLPHKSISDNVPKEAIIM</sequence>
<evidence type="ECO:0000269" key="1">
    <source>
    </source>
</evidence>
<evidence type="ECO:0000269" key="2">
    <source>
    </source>
</evidence>
<evidence type="ECO:0000269" key="3">
    <source>
    </source>
</evidence>
<evidence type="ECO:0000303" key="4">
    <source>
    </source>
</evidence>
<evidence type="ECO:0000303" key="5">
    <source ref="2"/>
</evidence>
<evidence type="ECO:0000305" key="6"/>
<evidence type="ECO:0007744" key="7">
    <source>
    </source>
</evidence>
<evidence type="ECO:0007744" key="8">
    <source>
    </source>
</evidence>